<keyword id="KW-0963">Cytoplasm</keyword>
<keyword id="KW-0378">Hydrolase</keyword>
<evidence type="ECO:0000255" key="1">
    <source>
        <dbReference type="HAMAP-Rule" id="MF_00907"/>
    </source>
</evidence>
<name>ENTH_ECO5E</name>
<organism>
    <name type="scientific">Escherichia coli O157:H7 (strain EC4115 / EHEC)</name>
    <dbReference type="NCBI Taxonomy" id="444450"/>
    <lineage>
        <taxon>Bacteria</taxon>
        <taxon>Pseudomonadati</taxon>
        <taxon>Pseudomonadota</taxon>
        <taxon>Gammaproteobacteria</taxon>
        <taxon>Enterobacterales</taxon>
        <taxon>Enterobacteriaceae</taxon>
        <taxon>Escherichia</taxon>
    </lineage>
</organism>
<accession>B5YPU3</accession>
<dbReference type="EC" id="3.1.2.-" evidence="1"/>
<dbReference type="EMBL" id="CP001164">
    <property type="protein sequence ID" value="ACI36596.1"/>
    <property type="molecule type" value="Genomic_DNA"/>
</dbReference>
<dbReference type="RefSeq" id="WP_000637937.1">
    <property type="nucleotide sequence ID" value="NC_011353.1"/>
</dbReference>
<dbReference type="SMR" id="B5YPU3"/>
<dbReference type="KEGG" id="ecf:ECH74115_0682"/>
<dbReference type="HOGENOM" id="CLU_089876_13_1_6"/>
<dbReference type="UniPathway" id="UPA00017"/>
<dbReference type="GO" id="GO:0005829">
    <property type="term" value="C:cytosol"/>
    <property type="evidence" value="ECO:0007669"/>
    <property type="project" value="TreeGrafter"/>
</dbReference>
<dbReference type="GO" id="GO:0061522">
    <property type="term" value="F:1,4-dihydroxy-2-naphthoyl-CoA thioesterase activity"/>
    <property type="evidence" value="ECO:0007669"/>
    <property type="project" value="TreeGrafter"/>
</dbReference>
<dbReference type="GO" id="GO:0009239">
    <property type="term" value="P:enterobactin biosynthetic process"/>
    <property type="evidence" value="ECO:0007669"/>
    <property type="project" value="UniProtKB-UniRule"/>
</dbReference>
<dbReference type="CDD" id="cd03443">
    <property type="entry name" value="PaaI_thioesterase"/>
    <property type="match status" value="1"/>
</dbReference>
<dbReference type="FunFam" id="3.10.129.10:FF:000002">
    <property type="entry name" value="1,4-dihydroxy-2-naphthoyl-CoA hydrolase"/>
    <property type="match status" value="1"/>
</dbReference>
<dbReference type="Gene3D" id="3.10.129.10">
    <property type="entry name" value="Hotdog Thioesterase"/>
    <property type="match status" value="1"/>
</dbReference>
<dbReference type="HAMAP" id="MF_00907">
    <property type="entry name" value="Thioesterase_EntH"/>
    <property type="match status" value="1"/>
</dbReference>
<dbReference type="InterPro" id="IPR029069">
    <property type="entry name" value="HotDog_dom_sf"/>
</dbReference>
<dbReference type="InterPro" id="IPR003736">
    <property type="entry name" value="PAAI_dom"/>
</dbReference>
<dbReference type="InterPro" id="IPR026576">
    <property type="entry name" value="Thioesterase_EntH"/>
</dbReference>
<dbReference type="InterPro" id="IPR006683">
    <property type="entry name" value="Thioestr_dom"/>
</dbReference>
<dbReference type="NCBIfam" id="NF007607">
    <property type="entry name" value="PRK10254.1"/>
    <property type="match status" value="1"/>
</dbReference>
<dbReference type="NCBIfam" id="TIGR00369">
    <property type="entry name" value="unchar_dom_1"/>
    <property type="match status" value="1"/>
</dbReference>
<dbReference type="PANTHER" id="PTHR43240">
    <property type="entry name" value="1,4-DIHYDROXY-2-NAPHTHOYL-COA THIOESTERASE 1"/>
    <property type="match status" value="1"/>
</dbReference>
<dbReference type="PANTHER" id="PTHR43240:SF9">
    <property type="entry name" value="PROOFREADING THIOESTERASE ENTH"/>
    <property type="match status" value="1"/>
</dbReference>
<dbReference type="Pfam" id="PF03061">
    <property type="entry name" value="4HBT"/>
    <property type="match status" value="1"/>
</dbReference>
<dbReference type="SUPFAM" id="SSF54637">
    <property type="entry name" value="Thioesterase/thiol ester dehydrase-isomerase"/>
    <property type="match status" value="1"/>
</dbReference>
<sequence>MIWKRHLTLDELNATSDNTMVAHLGIVYTRLGDDVLEAEMPVDIRTHQPFGLLHGGASAALAETLGSMAGFMMTRDGQCVVGTELNATHHRPVSEGKVRGVCQPLHLGRQNQSWEIVVFDEQGRRCCTCRLGTAVLG</sequence>
<protein>
    <recommendedName>
        <fullName evidence="1">Proofreading thioesterase EntH</fullName>
        <ecNumber evidence="1">3.1.2.-</ecNumber>
    </recommendedName>
    <alternativeName>
        <fullName evidence="1">Enterobactin synthase component H</fullName>
    </alternativeName>
</protein>
<comment type="function">
    <text evidence="1">Required for optimal enterobactin synthesis. Acts as a proofreading enzyme that prevents EntB misacylation by hydrolyzing the thioester bound existing between EntB and wrongly charged molecules.</text>
</comment>
<comment type="pathway">
    <text evidence="1">Siderophore biosynthesis; enterobactin biosynthesis.</text>
</comment>
<comment type="subunit">
    <text evidence="1">Homotetramer. Dimer of dimers. Interacts specifically with the aryl carrier protein (ArCP) domain of EntB.</text>
</comment>
<comment type="subcellular location">
    <subcellularLocation>
        <location evidence="1">Cytoplasm</location>
    </subcellularLocation>
</comment>
<comment type="similarity">
    <text evidence="1">Belongs to the thioesterase PaaI family.</text>
</comment>
<reference key="1">
    <citation type="journal article" date="2011" name="Proc. Natl. Acad. Sci. U.S.A.">
        <title>Genomic anatomy of Escherichia coli O157:H7 outbreaks.</title>
        <authorList>
            <person name="Eppinger M."/>
            <person name="Mammel M.K."/>
            <person name="Leclerc J.E."/>
            <person name="Ravel J."/>
            <person name="Cebula T.A."/>
        </authorList>
    </citation>
    <scope>NUCLEOTIDE SEQUENCE [LARGE SCALE GENOMIC DNA]</scope>
    <source>
        <strain>EC4115 / EHEC</strain>
    </source>
</reference>
<gene>
    <name evidence="1" type="primary">entH</name>
    <name type="ordered locus">ECH74115_0682</name>
</gene>
<feature type="chain" id="PRO_0000413868" description="Proofreading thioesterase EntH">
    <location>
        <begin position="1"/>
        <end position="137"/>
    </location>
</feature>
<feature type="active site" description="Nucleophile or proton acceptor" evidence="1">
    <location>
        <position position="63"/>
    </location>
</feature>
<proteinExistence type="inferred from homology"/>